<dbReference type="EC" id="4.1.1.37" evidence="1"/>
<dbReference type="EMBL" id="CP000270">
    <property type="protein sequence ID" value="ABE32883.1"/>
    <property type="molecule type" value="Genomic_DNA"/>
</dbReference>
<dbReference type="RefSeq" id="WP_011490285.1">
    <property type="nucleotide sequence ID" value="NC_007951.1"/>
</dbReference>
<dbReference type="SMR" id="Q13SQ6"/>
<dbReference type="STRING" id="266265.Bxe_A0044"/>
<dbReference type="KEGG" id="bxb:DR64_2223"/>
<dbReference type="KEGG" id="bxe:Bxe_A0044"/>
<dbReference type="PATRIC" id="fig|266265.5.peg.4569"/>
<dbReference type="eggNOG" id="COG0407">
    <property type="taxonomic scope" value="Bacteria"/>
</dbReference>
<dbReference type="OrthoDB" id="9806656at2"/>
<dbReference type="UniPathway" id="UPA00251">
    <property type="reaction ID" value="UER00321"/>
</dbReference>
<dbReference type="Proteomes" id="UP000001817">
    <property type="component" value="Chromosome 1"/>
</dbReference>
<dbReference type="GO" id="GO:0005829">
    <property type="term" value="C:cytosol"/>
    <property type="evidence" value="ECO:0007669"/>
    <property type="project" value="TreeGrafter"/>
</dbReference>
<dbReference type="GO" id="GO:0004853">
    <property type="term" value="F:uroporphyrinogen decarboxylase activity"/>
    <property type="evidence" value="ECO:0007669"/>
    <property type="project" value="UniProtKB-UniRule"/>
</dbReference>
<dbReference type="GO" id="GO:0019353">
    <property type="term" value="P:protoporphyrinogen IX biosynthetic process from glutamate"/>
    <property type="evidence" value="ECO:0007669"/>
    <property type="project" value="TreeGrafter"/>
</dbReference>
<dbReference type="CDD" id="cd00717">
    <property type="entry name" value="URO-D"/>
    <property type="match status" value="1"/>
</dbReference>
<dbReference type="FunFam" id="3.20.20.210:FF:000001">
    <property type="entry name" value="Uroporphyrinogen decarboxylase"/>
    <property type="match status" value="1"/>
</dbReference>
<dbReference type="Gene3D" id="3.20.20.210">
    <property type="match status" value="1"/>
</dbReference>
<dbReference type="HAMAP" id="MF_00218">
    <property type="entry name" value="URO_D"/>
    <property type="match status" value="1"/>
</dbReference>
<dbReference type="InterPro" id="IPR038071">
    <property type="entry name" value="UROD/MetE-like_sf"/>
</dbReference>
<dbReference type="InterPro" id="IPR006361">
    <property type="entry name" value="Uroporphyrinogen_deCO2ase_HemE"/>
</dbReference>
<dbReference type="InterPro" id="IPR000257">
    <property type="entry name" value="Uroporphyrinogen_deCOase"/>
</dbReference>
<dbReference type="NCBIfam" id="TIGR01464">
    <property type="entry name" value="hemE"/>
    <property type="match status" value="1"/>
</dbReference>
<dbReference type="PANTHER" id="PTHR21091">
    <property type="entry name" value="METHYLTETRAHYDROFOLATE:HOMOCYSTEINE METHYLTRANSFERASE RELATED"/>
    <property type="match status" value="1"/>
</dbReference>
<dbReference type="PANTHER" id="PTHR21091:SF169">
    <property type="entry name" value="UROPORPHYRINOGEN DECARBOXYLASE"/>
    <property type="match status" value="1"/>
</dbReference>
<dbReference type="Pfam" id="PF01208">
    <property type="entry name" value="URO-D"/>
    <property type="match status" value="1"/>
</dbReference>
<dbReference type="SUPFAM" id="SSF51726">
    <property type="entry name" value="UROD/MetE-like"/>
    <property type="match status" value="1"/>
</dbReference>
<dbReference type="PROSITE" id="PS00906">
    <property type="entry name" value="UROD_1"/>
    <property type="match status" value="1"/>
</dbReference>
<dbReference type="PROSITE" id="PS00907">
    <property type="entry name" value="UROD_2"/>
    <property type="match status" value="1"/>
</dbReference>
<sequence length="366" mass="40018">MAHKLLNDTFLRALLRQPTDYTPIWLMRQAGRYLPEYNATRARAGSFLGLAKNPAFATEVTLQPLERYPLDAAILFSDILTVPDAMGLGLEFVTGEGPKFARPVRTEDDVARLAVPDIDATLRYVTDAVREIRTALTDAQGRQRVPLIGFSGSPWTLACYMVEGGGSADFRTVKSMLYARPDLMHRILDVNARAVAAYLNAQIEAGAQAVMIFDTWGGALADGVYQRFSLHYIQQVVSQLKRDHDGEKVPVITFTKGGGLWLDEIAETGVDAVGLDWTVNLSKARERVGGKVALQGNIDPSVLFAPPAAIRMEARAVLDSFGNHPGHVFNLGHGISQFTPPEHVAELVDEVHRHSRAIRSGAHAPA</sequence>
<comment type="function">
    <text evidence="1">Catalyzes the decarboxylation of four acetate groups of uroporphyrinogen-III to yield coproporphyrinogen-III.</text>
</comment>
<comment type="catalytic activity">
    <reaction evidence="1">
        <text>uroporphyrinogen III + 4 H(+) = coproporphyrinogen III + 4 CO2</text>
        <dbReference type="Rhea" id="RHEA:19865"/>
        <dbReference type="ChEBI" id="CHEBI:15378"/>
        <dbReference type="ChEBI" id="CHEBI:16526"/>
        <dbReference type="ChEBI" id="CHEBI:57308"/>
        <dbReference type="ChEBI" id="CHEBI:57309"/>
        <dbReference type="EC" id="4.1.1.37"/>
    </reaction>
</comment>
<comment type="pathway">
    <text evidence="1">Porphyrin-containing compound metabolism; protoporphyrin-IX biosynthesis; coproporphyrinogen-III from 5-aminolevulinate: step 4/4.</text>
</comment>
<comment type="subunit">
    <text evidence="1">Homodimer.</text>
</comment>
<comment type="subcellular location">
    <subcellularLocation>
        <location evidence="1">Cytoplasm</location>
    </subcellularLocation>
</comment>
<comment type="similarity">
    <text evidence="1">Belongs to the uroporphyrinogen decarboxylase family.</text>
</comment>
<protein>
    <recommendedName>
        <fullName evidence="1">Uroporphyrinogen decarboxylase</fullName>
        <shortName evidence="1">UPD</shortName>
        <shortName evidence="1">URO-D</shortName>
        <ecNumber evidence="1">4.1.1.37</ecNumber>
    </recommendedName>
</protein>
<accession>Q13SQ6</accession>
<evidence type="ECO:0000255" key="1">
    <source>
        <dbReference type="HAMAP-Rule" id="MF_00218"/>
    </source>
</evidence>
<gene>
    <name evidence="1" type="primary">hemE</name>
    <name type="ordered locus">Bxeno_A4345</name>
    <name type="ORF">Bxe_A0044</name>
</gene>
<name>DCUP_PARXL</name>
<proteinExistence type="inferred from homology"/>
<keyword id="KW-0963">Cytoplasm</keyword>
<keyword id="KW-0210">Decarboxylase</keyword>
<keyword id="KW-0456">Lyase</keyword>
<keyword id="KW-0627">Porphyrin biosynthesis</keyword>
<keyword id="KW-1185">Reference proteome</keyword>
<feature type="chain" id="PRO_1000023886" description="Uroporphyrinogen decarboxylase">
    <location>
        <begin position="1"/>
        <end position="366"/>
    </location>
</feature>
<feature type="binding site" evidence="1">
    <location>
        <begin position="28"/>
        <end position="32"/>
    </location>
    <ligand>
        <name>substrate</name>
    </ligand>
</feature>
<feature type="binding site" evidence="1">
    <location>
        <position position="78"/>
    </location>
    <ligand>
        <name>substrate</name>
    </ligand>
</feature>
<feature type="binding site" evidence="1">
    <location>
        <position position="160"/>
    </location>
    <ligand>
        <name>substrate</name>
    </ligand>
</feature>
<feature type="binding site" evidence="1">
    <location>
        <position position="215"/>
    </location>
    <ligand>
        <name>substrate</name>
    </ligand>
</feature>
<feature type="binding site" evidence="1">
    <location>
        <position position="333"/>
    </location>
    <ligand>
        <name>substrate</name>
    </ligand>
</feature>
<feature type="site" description="Transition state stabilizer" evidence="1">
    <location>
        <position position="78"/>
    </location>
</feature>
<organism>
    <name type="scientific">Paraburkholderia xenovorans (strain LB400)</name>
    <dbReference type="NCBI Taxonomy" id="266265"/>
    <lineage>
        <taxon>Bacteria</taxon>
        <taxon>Pseudomonadati</taxon>
        <taxon>Pseudomonadota</taxon>
        <taxon>Betaproteobacteria</taxon>
        <taxon>Burkholderiales</taxon>
        <taxon>Burkholderiaceae</taxon>
        <taxon>Paraburkholderia</taxon>
    </lineage>
</organism>
<reference key="1">
    <citation type="journal article" date="2006" name="Proc. Natl. Acad. Sci. U.S.A.">
        <title>Burkholderia xenovorans LB400 harbors a multi-replicon, 9.73-Mbp genome shaped for versatility.</title>
        <authorList>
            <person name="Chain P.S.G."/>
            <person name="Denef V.J."/>
            <person name="Konstantinidis K.T."/>
            <person name="Vergez L.M."/>
            <person name="Agullo L."/>
            <person name="Reyes V.L."/>
            <person name="Hauser L."/>
            <person name="Cordova M."/>
            <person name="Gomez L."/>
            <person name="Gonzalez M."/>
            <person name="Land M."/>
            <person name="Lao V."/>
            <person name="Larimer F."/>
            <person name="LiPuma J.J."/>
            <person name="Mahenthiralingam E."/>
            <person name="Malfatti S.A."/>
            <person name="Marx C.J."/>
            <person name="Parnell J.J."/>
            <person name="Ramette A."/>
            <person name="Richardson P."/>
            <person name="Seeger M."/>
            <person name="Smith D."/>
            <person name="Spilker T."/>
            <person name="Sul W.J."/>
            <person name="Tsoi T.V."/>
            <person name="Ulrich L.E."/>
            <person name="Zhulin I.B."/>
            <person name="Tiedje J.M."/>
        </authorList>
    </citation>
    <scope>NUCLEOTIDE SEQUENCE [LARGE SCALE GENOMIC DNA]</scope>
    <source>
        <strain>LB400</strain>
    </source>
</reference>